<protein>
    <recommendedName>
        <fullName evidence="8">Cyclic nucleotide-gated ion channel 18</fullName>
    </recommendedName>
    <alternativeName>
        <fullName evidence="8">Cyclic nucleotide- and calmodulin-regulated ion channel 18</fullName>
    </alternativeName>
</protein>
<reference key="1">
    <citation type="journal article" date="2000" name="Nature">
        <title>Sequence and analysis of chromosome 5 of the plant Arabidopsis thaliana.</title>
        <authorList>
            <person name="Tabata S."/>
            <person name="Kaneko T."/>
            <person name="Nakamura Y."/>
            <person name="Kotani H."/>
            <person name="Kato T."/>
            <person name="Asamizu E."/>
            <person name="Miyajima N."/>
            <person name="Sasamoto S."/>
            <person name="Kimura T."/>
            <person name="Hosouchi T."/>
            <person name="Kawashima K."/>
            <person name="Kohara M."/>
            <person name="Matsumoto M."/>
            <person name="Matsuno A."/>
            <person name="Muraki A."/>
            <person name="Nakayama S."/>
            <person name="Nakazaki N."/>
            <person name="Naruo K."/>
            <person name="Okumura S."/>
            <person name="Shinpo S."/>
            <person name="Takeuchi C."/>
            <person name="Wada T."/>
            <person name="Watanabe A."/>
            <person name="Yamada M."/>
            <person name="Yasuda M."/>
            <person name="Sato S."/>
            <person name="de la Bastide M."/>
            <person name="Huang E."/>
            <person name="Spiegel L."/>
            <person name="Gnoj L."/>
            <person name="O'Shaughnessy A."/>
            <person name="Preston R."/>
            <person name="Habermann K."/>
            <person name="Murray J."/>
            <person name="Johnson D."/>
            <person name="Rohlfing T."/>
            <person name="Nelson J."/>
            <person name="Stoneking T."/>
            <person name="Pepin K."/>
            <person name="Spieth J."/>
            <person name="Sekhon M."/>
            <person name="Armstrong J."/>
            <person name="Becker M."/>
            <person name="Belter E."/>
            <person name="Cordum H."/>
            <person name="Cordes M."/>
            <person name="Courtney L."/>
            <person name="Courtney W."/>
            <person name="Dante M."/>
            <person name="Du H."/>
            <person name="Edwards J."/>
            <person name="Fryman J."/>
            <person name="Haakensen B."/>
            <person name="Lamar E."/>
            <person name="Latreille P."/>
            <person name="Leonard S."/>
            <person name="Meyer R."/>
            <person name="Mulvaney E."/>
            <person name="Ozersky P."/>
            <person name="Riley A."/>
            <person name="Strowmatt C."/>
            <person name="Wagner-McPherson C."/>
            <person name="Wollam A."/>
            <person name="Yoakum M."/>
            <person name="Bell M."/>
            <person name="Dedhia N."/>
            <person name="Parnell L."/>
            <person name="Shah R."/>
            <person name="Rodriguez M."/>
            <person name="Hoon See L."/>
            <person name="Vil D."/>
            <person name="Baker J."/>
            <person name="Kirchoff K."/>
            <person name="Toth K."/>
            <person name="King L."/>
            <person name="Bahret A."/>
            <person name="Miller B."/>
            <person name="Marra M.A."/>
            <person name="Martienssen R."/>
            <person name="McCombie W.R."/>
            <person name="Wilson R.K."/>
            <person name="Murphy G."/>
            <person name="Bancroft I."/>
            <person name="Volckaert G."/>
            <person name="Wambutt R."/>
            <person name="Duesterhoeft A."/>
            <person name="Stiekema W."/>
            <person name="Pohl T."/>
            <person name="Entian K.-D."/>
            <person name="Terryn N."/>
            <person name="Hartley N."/>
            <person name="Bent E."/>
            <person name="Johnson S."/>
            <person name="Langham S.-A."/>
            <person name="McCullagh B."/>
            <person name="Robben J."/>
            <person name="Grymonprez B."/>
            <person name="Zimmermann W."/>
            <person name="Ramsperger U."/>
            <person name="Wedler H."/>
            <person name="Balke K."/>
            <person name="Wedler E."/>
            <person name="Peters S."/>
            <person name="van Staveren M."/>
            <person name="Dirkse W."/>
            <person name="Mooijman P."/>
            <person name="Klein Lankhorst R."/>
            <person name="Weitzenegger T."/>
            <person name="Bothe G."/>
            <person name="Rose M."/>
            <person name="Hauf J."/>
            <person name="Berneiser S."/>
            <person name="Hempel S."/>
            <person name="Feldpausch M."/>
            <person name="Lamberth S."/>
            <person name="Villarroel R."/>
            <person name="Gielen J."/>
            <person name="Ardiles W."/>
            <person name="Bents O."/>
            <person name="Lemcke K."/>
            <person name="Kolesov G."/>
            <person name="Mayer K.F.X."/>
            <person name="Rudd S."/>
            <person name="Schoof H."/>
            <person name="Schueller C."/>
            <person name="Zaccaria P."/>
            <person name="Mewes H.-W."/>
            <person name="Bevan M."/>
            <person name="Fransz P.F."/>
        </authorList>
    </citation>
    <scope>NUCLEOTIDE SEQUENCE [LARGE SCALE GENOMIC DNA]</scope>
    <source>
        <strain>cv. Columbia</strain>
    </source>
</reference>
<reference key="2">
    <citation type="journal article" date="2017" name="Plant J.">
        <title>Araport11: a complete reannotation of the Arabidopsis thaliana reference genome.</title>
        <authorList>
            <person name="Cheng C.Y."/>
            <person name="Krishnakumar V."/>
            <person name="Chan A.P."/>
            <person name="Thibaud-Nissen F."/>
            <person name="Schobel S."/>
            <person name="Town C.D."/>
        </authorList>
    </citation>
    <scope>GENOME REANNOTATION</scope>
    <source>
        <strain>cv. Columbia</strain>
    </source>
</reference>
<reference key="3">
    <citation type="journal article" date="2001" name="Plant Physiol.">
        <title>Phylogenetic relationships within cation transporter families of Arabidopsis.</title>
        <authorList>
            <person name="Maeser P."/>
            <person name="Thomine S."/>
            <person name="Schroeder J.I."/>
            <person name="Ward J.M."/>
            <person name="Hirschi K."/>
            <person name="Sze H."/>
            <person name="Talke I.N."/>
            <person name="Amtmann A."/>
            <person name="Maathuis F.J.M."/>
            <person name="Sanders D."/>
            <person name="Harper J.F."/>
            <person name="Tchieu J."/>
            <person name="Gribskov M."/>
            <person name="Persans M.W."/>
            <person name="Salt D.E."/>
            <person name="Kim S.A."/>
            <person name="Guerinot M.L."/>
        </authorList>
    </citation>
    <scope>GENE FAMILY</scope>
    <scope>NOMENCLATURE</scope>
</reference>
<reference key="4">
    <citation type="journal article" date="2007" name="Proc. Natl. Acad. Sci. U.S.A.">
        <title>A cyclic nucleotide-gated channel is essential for polarized tip growth of pollen.</title>
        <authorList>
            <person name="Frietsch S."/>
            <person name="Wang Y.F."/>
            <person name="Sladek C."/>
            <person name="Poulsen L.R."/>
            <person name="Romanowsky S.M."/>
            <person name="Schroeder J.I."/>
            <person name="Harper J.F."/>
        </authorList>
    </citation>
    <scope>FUNCTION</scope>
    <scope>DISRUPTION PHENOTYPE</scope>
    <scope>TISSUE SPECIFICITY</scope>
    <scope>SUBCELLULAR LOCATION</scope>
</reference>
<reference key="5">
    <citation type="journal article" date="2014" name="Mol. Plant">
        <title>Arabidopsis CNGC18 is a Ca(2+)-permeable channel.</title>
        <authorList>
            <person name="Gao Q.F."/>
            <person name="Fei C.F."/>
            <person name="Dong J.Y."/>
            <person name="Gu L.L."/>
            <person name="Wang Y.F."/>
        </authorList>
    </citation>
    <scope>FUNCTION</scope>
    <scope>SUBUNIT</scope>
</reference>
<reference key="6">
    <citation type="journal article" date="2014" name="Mol. Plant">
        <title>A calcium-dependent protein kinase interacts with and activates a calcium channel to regulate pollen tube growth.</title>
        <authorList>
            <person name="Zhou L."/>
            <person name="Lan W."/>
            <person name="Jiang Y."/>
            <person name="Fang W."/>
            <person name="Luan S."/>
        </authorList>
    </citation>
    <scope>FUNCTION</scope>
    <scope>INTERACTION WITH CPK32</scope>
    <scope>SUBCELLULAR LOCATION</scope>
</reference>
<reference key="7">
    <citation type="journal article" date="2016" name="Proc. Natl. Acad. Sci. U.S.A.">
        <title>Cyclic nucleotide-gated channel 18 is an essential Ca2+ channel in pollen tube tips for pollen tube guidance to ovules in Arabidopsis.</title>
        <authorList>
            <person name="Gao Q.F."/>
            <person name="Gu L.L."/>
            <person name="Wang H.Q."/>
            <person name="Fei C.F."/>
            <person name="Fang X."/>
            <person name="Hussain J."/>
            <person name="Sun S.J."/>
            <person name="Dong J.Y."/>
            <person name="Liu H."/>
            <person name="Wang Y.F."/>
        </authorList>
    </citation>
    <scope>FUNCTION</scope>
    <scope>MUTAGENESIS OF ARG-491 AND ARG-578</scope>
    <scope>DOMAIN</scope>
</reference>
<name>CNG18_ARATH</name>
<organism>
    <name type="scientific">Arabidopsis thaliana</name>
    <name type="common">Mouse-ear cress</name>
    <dbReference type="NCBI Taxonomy" id="3702"/>
    <lineage>
        <taxon>Eukaryota</taxon>
        <taxon>Viridiplantae</taxon>
        <taxon>Streptophyta</taxon>
        <taxon>Embryophyta</taxon>
        <taxon>Tracheophyta</taxon>
        <taxon>Spermatophyta</taxon>
        <taxon>Magnoliopsida</taxon>
        <taxon>eudicotyledons</taxon>
        <taxon>Gunneridae</taxon>
        <taxon>Pentapetalae</taxon>
        <taxon>rosids</taxon>
        <taxon>malvids</taxon>
        <taxon>Brassicales</taxon>
        <taxon>Brassicaceae</taxon>
        <taxon>Camelineae</taxon>
        <taxon>Arabidopsis</taxon>
    </lineage>
</organism>
<dbReference type="EMBL" id="AL391149">
    <property type="protein sequence ID" value="CAC01886.1"/>
    <property type="molecule type" value="Genomic_DNA"/>
</dbReference>
<dbReference type="EMBL" id="CP002688">
    <property type="protein sequence ID" value="AED92084.1"/>
    <property type="molecule type" value="Genomic_DNA"/>
</dbReference>
<dbReference type="PIR" id="T51432">
    <property type="entry name" value="T51432"/>
</dbReference>
<dbReference type="RefSeq" id="NP_196991.1">
    <property type="nucleotide sequence ID" value="NM_121491.3"/>
</dbReference>
<dbReference type="BioGRID" id="16616">
    <property type="interactions" value="19"/>
</dbReference>
<dbReference type="FunCoup" id="Q9LEQ3">
    <property type="interactions" value="209"/>
</dbReference>
<dbReference type="IntAct" id="Q9LEQ3">
    <property type="interactions" value="17"/>
</dbReference>
<dbReference type="STRING" id="3702.Q9LEQ3"/>
<dbReference type="TCDB" id="1.A.1.5.26">
    <property type="family name" value="the voltage-gated ion channel (vic) superfamily"/>
</dbReference>
<dbReference type="PaxDb" id="3702-AT5G14870.1"/>
<dbReference type="ProteomicsDB" id="241238"/>
<dbReference type="EnsemblPlants" id="AT5G14870.1">
    <property type="protein sequence ID" value="AT5G14870.1"/>
    <property type="gene ID" value="AT5G14870"/>
</dbReference>
<dbReference type="GeneID" id="831339"/>
<dbReference type="Gramene" id="AT5G14870.1">
    <property type="protein sequence ID" value="AT5G14870.1"/>
    <property type="gene ID" value="AT5G14870"/>
</dbReference>
<dbReference type="KEGG" id="ath:AT5G14870"/>
<dbReference type="Araport" id="AT5G14870"/>
<dbReference type="TAIR" id="AT5G14870">
    <property type="gene designation" value="CNGC18"/>
</dbReference>
<dbReference type="eggNOG" id="KOG0498">
    <property type="taxonomic scope" value="Eukaryota"/>
</dbReference>
<dbReference type="HOGENOM" id="CLU_013069_3_0_1"/>
<dbReference type="InParanoid" id="Q9LEQ3"/>
<dbReference type="OMA" id="NIVTYWN"/>
<dbReference type="PhylomeDB" id="Q9LEQ3"/>
<dbReference type="PRO" id="PR:Q9LEQ3"/>
<dbReference type="Proteomes" id="UP000006548">
    <property type="component" value="Chromosome 5"/>
</dbReference>
<dbReference type="ExpressionAtlas" id="Q9LEQ3">
    <property type="expression patterns" value="baseline and differential"/>
</dbReference>
<dbReference type="GO" id="GO:0016324">
    <property type="term" value="C:apical plasma membrane"/>
    <property type="evidence" value="ECO:0000314"/>
    <property type="project" value="TAIR"/>
</dbReference>
<dbReference type="GO" id="GO:0030659">
    <property type="term" value="C:cytoplasmic vesicle membrane"/>
    <property type="evidence" value="ECO:0007669"/>
    <property type="project" value="UniProtKB-SubCell"/>
</dbReference>
<dbReference type="GO" id="GO:0005262">
    <property type="term" value="F:calcium channel activity"/>
    <property type="evidence" value="ECO:0000314"/>
    <property type="project" value="TAIR"/>
</dbReference>
<dbReference type="GO" id="GO:0005516">
    <property type="term" value="F:calmodulin binding"/>
    <property type="evidence" value="ECO:0007669"/>
    <property type="project" value="UniProtKB-KW"/>
</dbReference>
<dbReference type="GO" id="GO:0030552">
    <property type="term" value="F:cAMP binding"/>
    <property type="evidence" value="ECO:0007669"/>
    <property type="project" value="UniProtKB-KW"/>
</dbReference>
<dbReference type="GO" id="GO:0030553">
    <property type="term" value="F:cGMP binding"/>
    <property type="evidence" value="ECO:0007669"/>
    <property type="project" value="UniProtKB-KW"/>
</dbReference>
<dbReference type="GO" id="GO:0006874">
    <property type="term" value="P:intracellular calcium ion homeostasis"/>
    <property type="evidence" value="ECO:0000314"/>
    <property type="project" value="TAIR"/>
</dbReference>
<dbReference type="GO" id="GO:0009860">
    <property type="term" value="P:pollen tube growth"/>
    <property type="evidence" value="ECO:0000315"/>
    <property type="project" value="TAIR"/>
</dbReference>
<dbReference type="CDD" id="cd00038">
    <property type="entry name" value="CAP_ED"/>
    <property type="match status" value="1"/>
</dbReference>
<dbReference type="FunFam" id="1.10.287.630:FF:000003">
    <property type="entry name" value="Cyclic nucleotide-gated ion channel 1"/>
    <property type="match status" value="1"/>
</dbReference>
<dbReference type="FunFam" id="2.60.120.10:FF:000024">
    <property type="entry name" value="Cyclic nucleotide-gated ion channel 1"/>
    <property type="match status" value="1"/>
</dbReference>
<dbReference type="Gene3D" id="1.10.287.70">
    <property type="match status" value="1"/>
</dbReference>
<dbReference type="Gene3D" id="1.10.287.630">
    <property type="entry name" value="Helix hairpin bin"/>
    <property type="match status" value="1"/>
</dbReference>
<dbReference type="Gene3D" id="2.60.120.10">
    <property type="entry name" value="Jelly Rolls"/>
    <property type="match status" value="1"/>
</dbReference>
<dbReference type="InterPro" id="IPR000595">
    <property type="entry name" value="cNMP-bd_dom"/>
</dbReference>
<dbReference type="InterPro" id="IPR018490">
    <property type="entry name" value="cNMP-bd_dom_sf"/>
</dbReference>
<dbReference type="InterPro" id="IPR005821">
    <property type="entry name" value="Ion_trans_dom"/>
</dbReference>
<dbReference type="InterPro" id="IPR014710">
    <property type="entry name" value="RmlC-like_jellyroll"/>
</dbReference>
<dbReference type="PANTHER" id="PTHR45651">
    <property type="entry name" value="CYCLIC NUCLEOTIDE-GATED ION CHANNEL 15-RELATED-RELATED"/>
    <property type="match status" value="1"/>
</dbReference>
<dbReference type="PANTHER" id="PTHR45651:SF39">
    <property type="entry name" value="CYCLIC NUCLEOTIDE-GATED ION CHANNEL 18"/>
    <property type="match status" value="1"/>
</dbReference>
<dbReference type="Pfam" id="PF00027">
    <property type="entry name" value="cNMP_binding"/>
    <property type="match status" value="1"/>
</dbReference>
<dbReference type="Pfam" id="PF00520">
    <property type="entry name" value="Ion_trans"/>
    <property type="match status" value="1"/>
</dbReference>
<dbReference type="SMART" id="SM00100">
    <property type="entry name" value="cNMP"/>
    <property type="match status" value="1"/>
</dbReference>
<dbReference type="SUPFAM" id="SSF51206">
    <property type="entry name" value="cAMP-binding domain-like"/>
    <property type="match status" value="1"/>
</dbReference>
<dbReference type="SUPFAM" id="SSF81324">
    <property type="entry name" value="Voltage-gated potassium channels"/>
    <property type="match status" value="1"/>
</dbReference>
<dbReference type="PROSITE" id="PS50042">
    <property type="entry name" value="CNMP_BINDING_3"/>
    <property type="match status" value="1"/>
</dbReference>
<gene>
    <name evidence="8" type="primary">CNGC18</name>
    <name evidence="10" type="ordered locus">At5g14870</name>
    <name evidence="11" type="ORF">T9L3_170</name>
</gene>
<evidence type="ECO:0000250" key="1"/>
<evidence type="ECO:0000255" key="2"/>
<evidence type="ECO:0000256" key="3">
    <source>
        <dbReference type="SAM" id="MobiDB-lite"/>
    </source>
</evidence>
<evidence type="ECO:0000269" key="4">
    <source>
    </source>
</evidence>
<evidence type="ECO:0000269" key="5">
    <source>
    </source>
</evidence>
<evidence type="ECO:0000269" key="6">
    <source>
    </source>
</evidence>
<evidence type="ECO:0000269" key="7">
    <source>
    </source>
</evidence>
<evidence type="ECO:0000303" key="8">
    <source>
    </source>
</evidence>
<evidence type="ECO:0000305" key="9"/>
<evidence type="ECO:0000312" key="10">
    <source>
        <dbReference type="Araport" id="AT5G14870"/>
    </source>
</evidence>
<evidence type="ECO:0000312" key="11">
    <source>
        <dbReference type="EMBL" id="CAC01886.1"/>
    </source>
</evidence>
<keyword id="KW-0112">Calmodulin-binding</keyword>
<keyword id="KW-0114">cAMP</keyword>
<keyword id="KW-0116">cAMP-binding</keyword>
<keyword id="KW-1003">Cell membrane</keyword>
<keyword id="KW-0140">cGMP</keyword>
<keyword id="KW-0142">cGMP-binding</keyword>
<keyword id="KW-0968">Cytoplasmic vesicle</keyword>
<keyword id="KW-0407">Ion channel</keyword>
<keyword id="KW-0406">Ion transport</keyword>
<keyword id="KW-1071">Ligand-gated ion channel</keyword>
<keyword id="KW-0472">Membrane</keyword>
<keyword id="KW-0547">Nucleotide-binding</keyword>
<keyword id="KW-1185">Reference proteome</keyword>
<keyword id="KW-0812">Transmembrane</keyword>
<keyword id="KW-1133">Transmembrane helix</keyword>
<keyword id="KW-0813">Transport</keyword>
<sequence>MNKIRSLRCLLPETITSASTAASNRGSDGSQFSVLWRHQILDPDSNIVTYWNHVFLITSILALFLDPFYFYVPYVGGPACLSIDISLAATVTFFRTVADIFHLLHIFMKFRTAFVARSSRVFGRGELVMDSREIAMRYLKTDFLIDVAAMLPLPQLVIWLVIPAATNGTANHANSTLALIVLVQYIPRSFIIFPLNQRIIKTTGFIAKTAWAGAAYNLLLYILASHVLGAMWYLSSIGRQFSCWSNVCKKDNALRVLDCLPSFLDCKSLEQPERQYWQNVTQVLSHCDATSSTTNFKFGMFAEAFTTQVATTDFVSKYLYCLWWGLRNLSSYGQNITTSVYLGETLFCITICIFGLILFTLLIGNMQSSLQSMSVRVEEWRVKRRDTEEWMRHRQLPPELQERVRRFVQYKWLATRGVDEESILHSLPTDLRREIQRHLCLSLVRRVPFFSQMDDQLLDAICGCLVSSLSTAGTYIFREGDPVNEMLFVIRGQIESSTTNGGRSGFFNSTTLRPGDFCGEELLTWALMPNSTLNLPSSTRSVRALSEVEAFALSAEDLKFVAHQFKRLQSKKLQHAFRYYSHQWRAWGACFVQSAWRRYKRRKLAKELSLHESSGYYYPDETGYNEEDEETREYYYGSDEEGGSMDNTNLGATILASKFAANTRRGTNQKASSSSTGKKDGSSTSLKMPQLFKPDEPDFSIDKEDV</sequence>
<proteinExistence type="evidence at protein level"/>
<feature type="chain" id="PRO_0000219346" description="Cyclic nucleotide-gated ion channel 18">
    <location>
        <begin position="1"/>
        <end position="706"/>
    </location>
</feature>
<feature type="topological domain" description="Cytoplasmic" evidence="2">
    <location>
        <begin position="1"/>
        <end position="53"/>
    </location>
</feature>
<feature type="transmembrane region" description="Helical; Name=H1" evidence="2">
    <location>
        <begin position="54"/>
        <end position="74"/>
    </location>
</feature>
<feature type="topological domain" description="Extracellular" evidence="2">
    <location>
        <begin position="75"/>
        <end position="86"/>
    </location>
</feature>
<feature type="transmembrane region" description="Helical; Name=H2" evidence="2">
    <location>
        <begin position="87"/>
        <end position="107"/>
    </location>
</feature>
<feature type="topological domain" description="Cytoplasmic" evidence="2">
    <location>
        <begin position="108"/>
        <end position="142"/>
    </location>
</feature>
<feature type="transmembrane region" description="Helical; Name=H3" evidence="2">
    <location>
        <begin position="143"/>
        <end position="163"/>
    </location>
</feature>
<feature type="topological domain" description="Extracellular" evidence="2">
    <location>
        <begin position="164"/>
        <end position="174"/>
    </location>
</feature>
<feature type="transmembrane region" description="Helical; Name=H4" evidence="2">
    <location>
        <begin position="175"/>
        <end position="195"/>
    </location>
</feature>
<feature type="topological domain" description="Cytoplasmic" evidence="2">
    <location>
        <begin position="196"/>
        <end position="217"/>
    </location>
</feature>
<feature type="transmembrane region" description="Helical; Name=H5" evidence="2">
    <location>
        <begin position="218"/>
        <end position="238"/>
    </location>
</feature>
<feature type="topological domain" description="Extracellular" evidence="2">
    <location>
        <begin position="239"/>
        <end position="345"/>
    </location>
</feature>
<feature type="transmembrane region" description="Helical; Name=H6" evidence="2">
    <location>
        <begin position="346"/>
        <end position="366"/>
    </location>
</feature>
<feature type="topological domain" description="Cytoplasmic" evidence="2">
    <location>
        <begin position="367"/>
        <end position="706"/>
    </location>
</feature>
<feature type="domain" description="IQ">
    <location>
        <begin position="585"/>
        <end position="614"/>
    </location>
</feature>
<feature type="region of interest" description="Calmodulin-binding" evidence="1">
    <location>
        <begin position="565"/>
        <end position="580"/>
    </location>
</feature>
<feature type="region of interest" description="Disordered" evidence="3">
    <location>
        <begin position="661"/>
        <end position="706"/>
    </location>
</feature>
<feature type="compositionally biased region" description="Basic and acidic residues" evidence="3">
    <location>
        <begin position="693"/>
        <end position="706"/>
    </location>
</feature>
<feature type="binding site">
    <location>
        <begin position="449"/>
        <end position="579"/>
    </location>
    <ligand>
        <name>a nucleoside 3',5'-cyclic phosphate</name>
        <dbReference type="ChEBI" id="CHEBI:58464"/>
    </ligand>
</feature>
<feature type="binding site" evidence="1">
    <location>
        <position position="520"/>
    </location>
    <ligand>
        <name>a nucleoside 3',5'-cyclic phosphate</name>
        <dbReference type="ChEBI" id="CHEBI:58464"/>
    </ligand>
</feature>
<feature type="mutagenesis site" description="Impaired cGMP activation of the Ca(2+) channel and strong defects in pollen tube guidance." evidence="7">
    <original>R</original>
    <variation>Q</variation>
    <location>
        <position position="491"/>
    </location>
</feature>
<feature type="mutagenesis site" description="Impaired cGMP activation of the Ca(2+) channel and strong defects in pollen tube guidance." evidence="7">
    <original>R</original>
    <variation>K</variation>
    <location>
        <position position="578"/>
    </location>
</feature>
<accession>Q9LEQ3</accession>
<comment type="function">
    <text evidence="4 5 6 7">Cyclic nucleotide-gated ion channel required for directional pollen tube growth into the transmitting tract (PubMed:17726111, PubMed:26929345). Acts as a Ca(2+)-permeable divalent cation-selective channel inhibited by either lanthanum or gadolinium (PubMed:24380879). Regulated by CPK32 to mediate Ca(2+) transport across the plasma membrane in response to Ca(2+) oscillation (PubMed:24121288).</text>
</comment>
<comment type="subunit">
    <text evidence="5 6">Homomultimer (PubMed:24380879). Interacts with CPK32 (PubMed:24121288).</text>
</comment>
<comment type="subcellular location">
    <subcellularLocation>
        <location evidence="4 5">Cell membrane</location>
        <topology evidence="9">Multi-pass membrane protein</topology>
    </subcellularLocation>
    <subcellularLocation>
        <location evidence="4">Cytoplasmic vesicle membrane</location>
        <topology evidence="9">Multi-pass membrane protein</topology>
    </subcellularLocation>
    <text evidence="4 5">focused at the cell perimeter of the growing pollen tube tip.</text>
</comment>
<comment type="tissue specificity">
    <text evidence="4">Expressed in pollen grains. Not detected in leaves, roots or root hairs.</text>
</comment>
<comment type="domain">
    <text evidence="7">The transmembrane domains are indispensable for pollen tube guidance.</text>
</comment>
<comment type="domain">
    <text evidence="1">The binding of calmodulin to the C-terminus might interfere with cyclic nucleotide binding and thus channel activation.</text>
</comment>
<comment type="disruption phenotype">
    <text evidence="4">Male sterility.</text>
</comment>
<comment type="similarity">
    <text evidence="9">Belongs to the cyclic nucleotide-gated cation channel (TC 1.A.1.5) family.</text>
</comment>